<dbReference type="EC" id="2.7.2.1" evidence="1"/>
<dbReference type="EMBL" id="CP000671">
    <property type="protein sequence ID" value="ABQ98557.1"/>
    <property type="molecule type" value="Genomic_DNA"/>
</dbReference>
<dbReference type="SMR" id="A5UCQ6"/>
<dbReference type="KEGG" id="hip:CGSHiEE_06020"/>
<dbReference type="HOGENOM" id="CLU_020352_0_1_6"/>
<dbReference type="UniPathway" id="UPA00340">
    <property type="reaction ID" value="UER00458"/>
</dbReference>
<dbReference type="GO" id="GO:0005829">
    <property type="term" value="C:cytosol"/>
    <property type="evidence" value="ECO:0007669"/>
    <property type="project" value="TreeGrafter"/>
</dbReference>
<dbReference type="GO" id="GO:0008776">
    <property type="term" value="F:acetate kinase activity"/>
    <property type="evidence" value="ECO:0007669"/>
    <property type="project" value="UniProtKB-UniRule"/>
</dbReference>
<dbReference type="GO" id="GO:0005524">
    <property type="term" value="F:ATP binding"/>
    <property type="evidence" value="ECO:0007669"/>
    <property type="project" value="UniProtKB-KW"/>
</dbReference>
<dbReference type="GO" id="GO:0000287">
    <property type="term" value="F:magnesium ion binding"/>
    <property type="evidence" value="ECO:0007669"/>
    <property type="project" value="UniProtKB-UniRule"/>
</dbReference>
<dbReference type="GO" id="GO:0006083">
    <property type="term" value="P:acetate metabolic process"/>
    <property type="evidence" value="ECO:0007669"/>
    <property type="project" value="TreeGrafter"/>
</dbReference>
<dbReference type="GO" id="GO:0006085">
    <property type="term" value="P:acetyl-CoA biosynthetic process"/>
    <property type="evidence" value="ECO:0007669"/>
    <property type="project" value="UniProtKB-UniRule"/>
</dbReference>
<dbReference type="CDD" id="cd24010">
    <property type="entry name" value="ASKHA_NBD_AcK_PK"/>
    <property type="match status" value="1"/>
</dbReference>
<dbReference type="FunFam" id="3.30.420.40:FF:000041">
    <property type="entry name" value="Acetate kinase"/>
    <property type="match status" value="1"/>
</dbReference>
<dbReference type="FunFam" id="3.30.420.40:FF:000042">
    <property type="entry name" value="Acetate kinase"/>
    <property type="match status" value="1"/>
</dbReference>
<dbReference type="Gene3D" id="3.30.420.40">
    <property type="match status" value="2"/>
</dbReference>
<dbReference type="HAMAP" id="MF_00020">
    <property type="entry name" value="Acetate_kinase"/>
    <property type="match status" value="1"/>
</dbReference>
<dbReference type="InterPro" id="IPR004372">
    <property type="entry name" value="Ac/propionate_kinase"/>
</dbReference>
<dbReference type="InterPro" id="IPR000890">
    <property type="entry name" value="Aliphatic_acid_kin_short-chain"/>
</dbReference>
<dbReference type="InterPro" id="IPR023865">
    <property type="entry name" value="Aliphatic_acid_kinase_CS"/>
</dbReference>
<dbReference type="InterPro" id="IPR043129">
    <property type="entry name" value="ATPase_NBD"/>
</dbReference>
<dbReference type="NCBIfam" id="TIGR00016">
    <property type="entry name" value="ackA"/>
    <property type="match status" value="1"/>
</dbReference>
<dbReference type="PANTHER" id="PTHR21060">
    <property type="entry name" value="ACETATE KINASE"/>
    <property type="match status" value="1"/>
</dbReference>
<dbReference type="PANTHER" id="PTHR21060:SF21">
    <property type="entry name" value="ACETATE KINASE"/>
    <property type="match status" value="1"/>
</dbReference>
<dbReference type="Pfam" id="PF00871">
    <property type="entry name" value="Acetate_kinase"/>
    <property type="match status" value="1"/>
</dbReference>
<dbReference type="PIRSF" id="PIRSF000722">
    <property type="entry name" value="Acetate_prop_kin"/>
    <property type="match status" value="1"/>
</dbReference>
<dbReference type="PRINTS" id="PR00471">
    <property type="entry name" value="ACETATEKNASE"/>
</dbReference>
<dbReference type="SUPFAM" id="SSF53067">
    <property type="entry name" value="Actin-like ATPase domain"/>
    <property type="match status" value="2"/>
</dbReference>
<dbReference type="PROSITE" id="PS01075">
    <property type="entry name" value="ACETATE_KINASE_1"/>
    <property type="match status" value="1"/>
</dbReference>
<dbReference type="PROSITE" id="PS01076">
    <property type="entry name" value="ACETATE_KINASE_2"/>
    <property type="match status" value="1"/>
</dbReference>
<sequence length="401" mass="43645">MSKLVLILNCGSSSLKFAILDPATGEEKLSGLAEAFFLPEARIKWKLNGEKGNADLGAGAAHTEALNFIASNILTDELKNSIAAIGHRIVHGGEKYTQSVIVTDEVVKGIEDAAQFAPLHNPAHLIGIREAFNAFPHLKDKNVVVFDTAFHQTMSEEAFLYALPYSLYKEHGVRRYGAHGTSHYFISREVAEYVGKPADQVNAIICHLGNGGSVSVVRNGQCIDTSMGLTPLEGLVMGTRCGDIDPAIIFYLYKTLGMSMEQIEETLVKKSGLLGLTEVTSDCRYAEDNYDNASKPEAKRALNVYSYRLAKYIGAYMAVLGDDHLDAIAFTGGIGENSAHVRELALNHLKLFGIQIDNERNLAARFGKDGVITTDDSAFKAIVLPTNEELVIAQDTARLCF</sequence>
<keyword id="KW-0067">ATP-binding</keyword>
<keyword id="KW-0963">Cytoplasm</keyword>
<keyword id="KW-0418">Kinase</keyword>
<keyword id="KW-0460">Magnesium</keyword>
<keyword id="KW-0479">Metal-binding</keyword>
<keyword id="KW-0547">Nucleotide-binding</keyword>
<keyword id="KW-0808">Transferase</keyword>
<feature type="chain" id="PRO_1000002234" description="Acetate kinase">
    <location>
        <begin position="1"/>
        <end position="401"/>
    </location>
</feature>
<feature type="active site" description="Proton donor/acceptor" evidence="1">
    <location>
        <position position="147"/>
    </location>
</feature>
<feature type="binding site" evidence="1">
    <location>
        <position position="9"/>
    </location>
    <ligand>
        <name>Mg(2+)</name>
        <dbReference type="ChEBI" id="CHEBI:18420"/>
    </ligand>
</feature>
<feature type="binding site" evidence="1">
    <location>
        <position position="16"/>
    </location>
    <ligand>
        <name>ATP</name>
        <dbReference type="ChEBI" id="CHEBI:30616"/>
    </ligand>
</feature>
<feature type="binding site" evidence="1">
    <location>
        <position position="88"/>
    </location>
    <ligand>
        <name>substrate</name>
    </ligand>
</feature>
<feature type="binding site" evidence="1">
    <location>
        <begin position="207"/>
        <end position="211"/>
    </location>
    <ligand>
        <name>ATP</name>
        <dbReference type="ChEBI" id="CHEBI:30616"/>
    </ligand>
</feature>
<feature type="binding site" evidence="1">
    <location>
        <begin position="282"/>
        <end position="284"/>
    </location>
    <ligand>
        <name>ATP</name>
        <dbReference type="ChEBI" id="CHEBI:30616"/>
    </ligand>
</feature>
<feature type="binding site" evidence="1">
    <location>
        <begin position="333"/>
        <end position="337"/>
    </location>
    <ligand>
        <name>ATP</name>
        <dbReference type="ChEBI" id="CHEBI:30616"/>
    </ligand>
</feature>
<feature type="binding site" evidence="1">
    <location>
        <position position="388"/>
    </location>
    <ligand>
        <name>Mg(2+)</name>
        <dbReference type="ChEBI" id="CHEBI:18420"/>
    </ligand>
</feature>
<feature type="site" description="Transition state stabilizer" evidence="1">
    <location>
        <position position="179"/>
    </location>
</feature>
<feature type="site" description="Transition state stabilizer" evidence="1">
    <location>
        <position position="240"/>
    </location>
</feature>
<organism>
    <name type="scientific">Haemophilus influenzae (strain PittEE)</name>
    <dbReference type="NCBI Taxonomy" id="374930"/>
    <lineage>
        <taxon>Bacteria</taxon>
        <taxon>Pseudomonadati</taxon>
        <taxon>Pseudomonadota</taxon>
        <taxon>Gammaproteobacteria</taxon>
        <taxon>Pasteurellales</taxon>
        <taxon>Pasteurellaceae</taxon>
        <taxon>Haemophilus</taxon>
    </lineage>
</organism>
<reference key="1">
    <citation type="journal article" date="2007" name="Genome Biol.">
        <title>Characterization and modeling of the Haemophilus influenzae core and supragenomes based on the complete genomic sequences of Rd and 12 clinical nontypeable strains.</title>
        <authorList>
            <person name="Hogg J.S."/>
            <person name="Hu F.Z."/>
            <person name="Janto B."/>
            <person name="Boissy R."/>
            <person name="Hayes J."/>
            <person name="Keefe R."/>
            <person name="Post J.C."/>
            <person name="Ehrlich G.D."/>
        </authorList>
    </citation>
    <scope>NUCLEOTIDE SEQUENCE [LARGE SCALE GENOMIC DNA]</scope>
    <source>
        <strain>PittEE</strain>
    </source>
</reference>
<name>ACKA_HAEIE</name>
<protein>
    <recommendedName>
        <fullName evidence="1">Acetate kinase</fullName>
        <ecNumber evidence="1">2.7.2.1</ecNumber>
    </recommendedName>
    <alternativeName>
        <fullName evidence="1">Acetokinase</fullName>
    </alternativeName>
</protein>
<evidence type="ECO:0000255" key="1">
    <source>
        <dbReference type="HAMAP-Rule" id="MF_00020"/>
    </source>
</evidence>
<comment type="function">
    <text evidence="1">Catalyzes the formation of acetyl phosphate from acetate and ATP. Can also catalyze the reverse reaction.</text>
</comment>
<comment type="catalytic activity">
    <reaction evidence="1">
        <text>acetate + ATP = acetyl phosphate + ADP</text>
        <dbReference type="Rhea" id="RHEA:11352"/>
        <dbReference type="ChEBI" id="CHEBI:22191"/>
        <dbReference type="ChEBI" id="CHEBI:30089"/>
        <dbReference type="ChEBI" id="CHEBI:30616"/>
        <dbReference type="ChEBI" id="CHEBI:456216"/>
        <dbReference type="EC" id="2.7.2.1"/>
    </reaction>
</comment>
<comment type="cofactor">
    <cofactor evidence="1">
        <name>Mg(2+)</name>
        <dbReference type="ChEBI" id="CHEBI:18420"/>
    </cofactor>
    <cofactor evidence="1">
        <name>Mn(2+)</name>
        <dbReference type="ChEBI" id="CHEBI:29035"/>
    </cofactor>
    <text evidence="1">Mg(2+). Can also accept Mn(2+).</text>
</comment>
<comment type="pathway">
    <text evidence="1">Metabolic intermediate biosynthesis; acetyl-CoA biosynthesis; acetyl-CoA from acetate: step 1/2.</text>
</comment>
<comment type="subunit">
    <text evidence="1">Homodimer.</text>
</comment>
<comment type="subcellular location">
    <subcellularLocation>
        <location evidence="1">Cytoplasm</location>
    </subcellularLocation>
</comment>
<comment type="similarity">
    <text evidence="1">Belongs to the acetokinase family.</text>
</comment>
<accession>A5UCQ6</accession>
<gene>
    <name evidence="1" type="primary">ackA</name>
    <name type="ordered locus">CGSHiEE_06020</name>
</gene>
<proteinExistence type="inferred from homology"/>